<comment type="function">
    <text evidence="1">Involved in the biosynthesis of the chorismate, which leads to the biosynthesis of aromatic amino acids. Catalyzes the reversible NADPH linked reduction of 3-dehydroshikimate (DHSA) to yield shikimate (SA).</text>
</comment>
<comment type="catalytic activity">
    <reaction evidence="1">
        <text>shikimate + NADP(+) = 3-dehydroshikimate + NADPH + H(+)</text>
        <dbReference type="Rhea" id="RHEA:17737"/>
        <dbReference type="ChEBI" id="CHEBI:15378"/>
        <dbReference type="ChEBI" id="CHEBI:16630"/>
        <dbReference type="ChEBI" id="CHEBI:36208"/>
        <dbReference type="ChEBI" id="CHEBI:57783"/>
        <dbReference type="ChEBI" id="CHEBI:58349"/>
        <dbReference type="EC" id="1.1.1.25"/>
    </reaction>
</comment>
<comment type="pathway">
    <text evidence="1">Metabolic intermediate biosynthesis; chorismate biosynthesis; chorismate from D-erythrose 4-phosphate and phosphoenolpyruvate: step 4/7.</text>
</comment>
<comment type="subunit">
    <text evidence="1">Homodimer.</text>
</comment>
<comment type="similarity">
    <text evidence="1">Belongs to the shikimate dehydrogenase family.</text>
</comment>
<sequence length="262" mass="28507">MTKQFAVIGNPIEQSRSPELHHAFAEKTGVDLNYQKRLAPLDGFESSMRSFFAEGGSGMNVTVPFKEQAFALCNVLTERAQIAKAVNTLWMENGKLHGDNTDGQGLVAAIQALEWNLENTTILILGAGGATRGVIYPLVQAGAKKIVIANRTLARAEQLVDDLKTAVPQAQLQAISLNDLEGDFDIVINATSASLSGDALQLPEKLKFKYAYEMAYGKPSSFLDQAKQRNVPYAEGFGMLVGQAIEAFSIWNGVRPQLKDFL</sequence>
<dbReference type="EC" id="1.1.1.25" evidence="1"/>
<dbReference type="EMBL" id="CU468230">
    <property type="protein sequence ID" value="CAO99779.1"/>
    <property type="molecule type" value="Genomic_DNA"/>
</dbReference>
<dbReference type="SMR" id="B0VQB5"/>
<dbReference type="KEGG" id="abm:ABSDF0386"/>
<dbReference type="HOGENOM" id="CLU_044063_2_1_6"/>
<dbReference type="UniPathway" id="UPA00053">
    <property type="reaction ID" value="UER00087"/>
</dbReference>
<dbReference type="Proteomes" id="UP000001741">
    <property type="component" value="Chromosome"/>
</dbReference>
<dbReference type="GO" id="GO:0005829">
    <property type="term" value="C:cytosol"/>
    <property type="evidence" value="ECO:0007669"/>
    <property type="project" value="TreeGrafter"/>
</dbReference>
<dbReference type="GO" id="GO:0050661">
    <property type="term" value="F:NADP binding"/>
    <property type="evidence" value="ECO:0007669"/>
    <property type="project" value="InterPro"/>
</dbReference>
<dbReference type="GO" id="GO:0004764">
    <property type="term" value="F:shikimate 3-dehydrogenase (NADP+) activity"/>
    <property type="evidence" value="ECO:0007669"/>
    <property type="project" value="UniProtKB-UniRule"/>
</dbReference>
<dbReference type="GO" id="GO:0008652">
    <property type="term" value="P:amino acid biosynthetic process"/>
    <property type="evidence" value="ECO:0007669"/>
    <property type="project" value="UniProtKB-KW"/>
</dbReference>
<dbReference type="GO" id="GO:0009073">
    <property type="term" value="P:aromatic amino acid family biosynthetic process"/>
    <property type="evidence" value="ECO:0007669"/>
    <property type="project" value="UniProtKB-KW"/>
</dbReference>
<dbReference type="GO" id="GO:0009423">
    <property type="term" value="P:chorismate biosynthetic process"/>
    <property type="evidence" value="ECO:0007669"/>
    <property type="project" value="UniProtKB-UniRule"/>
</dbReference>
<dbReference type="GO" id="GO:0019632">
    <property type="term" value="P:shikimate metabolic process"/>
    <property type="evidence" value="ECO:0007669"/>
    <property type="project" value="InterPro"/>
</dbReference>
<dbReference type="CDD" id="cd01065">
    <property type="entry name" value="NAD_bind_Shikimate_DH"/>
    <property type="match status" value="1"/>
</dbReference>
<dbReference type="FunFam" id="3.40.50.10860:FF:000006">
    <property type="entry name" value="Shikimate dehydrogenase (NADP(+))"/>
    <property type="match status" value="1"/>
</dbReference>
<dbReference type="Gene3D" id="3.40.50.10860">
    <property type="entry name" value="Leucine Dehydrogenase, chain A, domain 1"/>
    <property type="match status" value="1"/>
</dbReference>
<dbReference type="Gene3D" id="3.40.50.720">
    <property type="entry name" value="NAD(P)-binding Rossmann-like Domain"/>
    <property type="match status" value="1"/>
</dbReference>
<dbReference type="HAMAP" id="MF_00222">
    <property type="entry name" value="Shikimate_DH_AroE"/>
    <property type="match status" value="1"/>
</dbReference>
<dbReference type="InterPro" id="IPR046346">
    <property type="entry name" value="Aminoacid_DH-like_N_sf"/>
</dbReference>
<dbReference type="InterPro" id="IPR036291">
    <property type="entry name" value="NAD(P)-bd_dom_sf"/>
</dbReference>
<dbReference type="InterPro" id="IPR041121">
    <property type="entry name" value="SDH_C"/>
</dbReference>
<dbReference type="InterPro" id="IPR011342">
    <property type="entry name" value="Shikimate_DH"/>
</dbReference>
<dbReference type="InterPro" id="IPR013708">
    <property type="entry name" value="Shikimate_DH-bd_N"/>
</dbReference>
<dbReference type="InterPro" id="IPR022893">
    <property type="entry name" value="Shikimate_DH_fam"/>
</dbReference>
<dbReference type="InterPro" id="IPR006151">
    <property type="entry name" value="Shikm_DH/Glu-tRNA_Rdtase"/>
</dbReference>
<dbReference type="NCBIfam" id="TIGR00507">
    <property type="entry name" value="aroE"/>
    <property type="match status" value="1"/>
</dbReference>
<dbReference type="NCBIfam" id="NF001310">
    <property type="entry name" value="PRK00258.1-2"/>
    <property type="match status" value="1"/>
</dbReference>
<dbReference type="PANTHER" id="PTHR21089:SF1">
    <property type="entry name" value="BIFUNCTIONAL 3-DEHYDROQUINATE DEHYDRATASE_SHIKIMATE DEHYDROGENASE, CHLOROPLASTIC"/>
    <property type="match status" value="1"/>
</dbReference>
<dbReference type="PANTHER" id="PTHR21089">
    <property type="entry name" value="SHIKIMATE DEHYDROGENASE"/>
    <property type="match status" value="1"/>
</dbReference>
<dbReference type="Pfam" id="PF18317">
    <property type="entry name" value="SDH_C"/>
    <property type="match status" value="1"/>
</dbReference>
<dbReference type="Pfam" id="PF01488">
    <property type="entry name" value="Shikimate_DH"/>
    <property type="match status" value="1"/>
</dbReference>
<dbReference type="Pfam" id="PF08501">
    <property type="entry name" value="Shikimate_dh_N"/>
    <property type="match status" value="1"/>
</dbReference>
<dbReference type="SUPFAM" id="SSF53223">
    <property type="entry name" value="Aminoacid dehydrogenase-like, N-terminal domain"/>
    <property type="match status" value="1"/>
</dbReference>
<dbReference type="SUPFAM" id="SSF51735">
    <property type="entry name" value="NAD(P)-binding Rossmann-fold domains"/>
    <property type="match status" value="1"/>
</dbReference>
<reference key="1">
    <citation type="journal article" date="2008" name="PLoS ONE">
        <title>Comparative analysis of Acinetobacters: three genomes for three lifestyles.</title>
        <authorList>
            <person name="Vallenet D."/>
            <person name="Nordmann P."/>
            <person name="Barbe V."/>
            <person name="Poirel L."/>
            <person name="Mangenot S."/>
            <person name="Bataille E."/>
            <person name="Dossat C."/>
            <person name="Gas S."/>
            <person name="Kreimeyer A."/>
            <person name="Lenoble P."/>
            <person name="Oztas S."/>
            <person name="Poulain J."/>
            <person name="Segurens B."/>
            <person name="Robert C."/>
            <person name="Abergel C."/>
            <person name="Claverie J.-M."/>
            <person name="Raoult D."/>
            <person name="Medigue C."/>
            <person name="Weissenbach J."/>
            <person name="Cruveiller S."/>
        </authorList>
    </citation>
    <scope>NUCLEOTIDE SEQUENCE [LARGE SCALE GENOMIC DNA]</scope>
    <source>
        <strain>SDF</strain>
    </source>
</reference>
<keyword id="KW-0028">Amino-acid biosynthesis</keyword>
<keyword id="KW-0057">Aromatic amino acid biosynthesis</keyword>
<keyword id="KW-0521">NADP</keyword>
<keyword id="KW-0560">Oxidoreductase</keyword>
<name>AROE_ACIBS</name>
<accession>B0VQB5</accession>
<gene>
    <name evidence="1" type="primary">aroE</name>
    <name type="ordered locus">ABSDF0386</name>
</gene>
<proteinExistence type="inferred from homology"/>
<feature type="chain" id="PRO_1000100096" description="Shikimate dehydrogenase (NADP(+))">
    <location>
        <begin position="1"/>
        <end position="262"/>
    </location>
</feature>
<feature type="active site" description="Proton acceptor" evidence="1">
    <location>
        <position position="66"/>
    </location>
</feature>
<feature type="binding site" evidence="1">
    <location>
        <begin position="15"/>
        <end position="17"/>
    </location>
    <ligand>
        <name>shikimate</name>
        <dbReference type="ChEBI" id="CHEBI:36208"/>
    </ligand>
</feature>
<feature type="binding site" evidence="1">
    <location>
        <position position="62"/>
    </location>
    <ligand>
        <name>shikimate</name>
        <dbReference type="ChEBI" id="CHEBI:36208"/>
    </ligand>
</feature>
<feature type="binding site" evidence="1">
    <location>
        <position position="78"/>
    </location>
    <ligand>
        <name>NADP(+)</name>
        <dbReference type="ChEBI" id="CHEBI:58349"/>
    </ligand>
</feature>
<feature type="binding site" evidence="1">
    <location>
        <position position="87"/>
    </location>
    <ligand>
        <name>shikimate</name>
        <dbReference type="ChEBI" id="CHEBI:36208"/>
    </ligand>
</feature>
<feature type="binding site" evidence="1">
    <location>
        <position position="102"/>
    </location>
    <ligand>
        <name>shikimate</name>
        <dbReference type="ChEBI" id="CHEBI:36208"/>
    </ligand>
</feature>
<feature type="binding site" evidence="1">
    <location>
        <begin position="126"/>
        <end position="130"/>
    </location>
    <ligand>
        <name>NADP(+)</name>
        <dbReference type="ChEBI" id="CHEBI:58349"/>
    </ligand>
</feature>
<feature type="binding site" evidence="1">
    <location>
        <begin position="150"/>
        <end position="155"/>
    </location>
    <ligand>
        <name>NADP(+)</name>
        <dbReference type="ChEBI" id="CHEBI:58349"/>
    </ligand>
</feature>
<feature type="binding site" evidence="1">
    <location>
        <position position="214"/>
    </location>
    <ligand>
        <name>NADP(+)</name>
        <dbReference type="ChEBI" id="CHEBI:58349"/>
    </ligand>
</feature>
<feature type="binding site" evidence="1">
    <location>
        <position position="216"/>
    </location>
    <ligand>
        <name>shikimate</name>
        <dbReference type="ChEBI" id="CHEBI:36208"/>
    </ligand>
</feature>
<feature type="binding site" evidence="1">
    <location>
        <position position="236"/>
    </location>
    <ligand>
        <name>NADP(+)</name>
        <dbReference type="ChEBI" id="CHEBI:58349"/>
    </ligand>
</feature>
<protein>
    <recommendedName>
        <fullName evidence="1">Shikimate dehydrogenase (NADP(+))</fullName>
        <shortName evidence="1">SDH</shortName>
        <ecNumber evidence="1">1.1.1.25</ecNumber>
    </recommendedName>
</protein>
<organism>
    <name type="scientific">Acinetobacter baumannii (strain SDF)</name>
    <dbReference type="NCBI Taxonomy" id="509170"/>
    <lineage>
        <taxon>Bacteria</taxon>
        <taxon>Pseudomonadati</taxon>
        <taxon>Pseudomonadota</taxon>
        <taxon>Gammaproteobacteria</taxon>
        <taxon>Moraxellales</taxon>
        <taxon>Moraxellaceae</taxon>
        <taxon>Acinetobacter</taxon>
        <taxon>Acinetobacter calcoaceticus/baumannii complex</taxon>
    </lineage>
</organism>
<evidence type="ECO:0000255" key="1">
    <source>
        <dbReference type="HAMAP-Rule" id="MF_00222"/>
    </source>
</evidence>